<comment type="function">
    <text evidence="1">Transcriptional repressor of the nikABCDE operon. Is active in the presence of excessive concentrations of intracellular nickel.</text>
</comment>
<comment type="cofactor">
    <cofactor evidence="1">
        <name>Ni(2+)</name>
        <dbReference type="ChEBI" id="CHEBI:49786"/>
    </cofactor>
    <text evidence="1">Binds 1 nickel ion per subunit.</text>
</comment>
<comment type="subunit">
    <text evidence="1">Homotetramer.</text>
</comment>
<comment type="similarity">
    <text evidence="1">Belongs to the transcriptional regulatory CopG/NikR family.</text>
</comment>
<proteinExistence type="inferred from homology"/>
<protein>
    <recommendedName>
        <fullName evidence="1">Nickel-responsive regulator</fullName>
    </recommendedName>
</protein>
<accession>Q0TBX7</accession>
<evidence type="ECO:0000255" key="1">
    <source>
        <dbReference type="HAMAP-Rule" id="MF_00476"/>
    </source>
</evidence>
<dbReference type="EMBL" id="CP000247">
    <property type="protein sequence ID" value="ABG71552.1"/>
    <property type="molecule type" value="Genomic_DNA"/>
</dbReference>
<dbReference type="RefSeq" id="WP_001190060.1">
    <property type="nucleotide sequence ID" value="NC_008253.1"/>
</dbReference>
<dbReference type="SMR" id="Q0TBX7"/>
<dbReference type="KEGG" id="ecp:ECP_3576"/>
<dbReference type="HOGENOM" id="CLU_113319_1_4_6"/>
<dbReference type="Proteomes" id="UP000009182">
    <property type="component" value="Chromosome"/>
</dbReference>
<dbReference type="GO" id="GO:0003700">
    <property type="term" value="F:DNA-binding transcription factor activity"/>
    <property type="evidence" value="ECO:0007669"/>
    <property type="project" value="UniProtKB-UniRule"/>
</dbReference>
<dbReference type="GO" id="GO:0016151">
    <property type="term" value="F:nickel cation binding"/>
    <property type="evidence" value="ECO:0007669"/>
    <property type="project" value="UniProtKB-UniRule"/>
</dbReference>
<dbReference type="GO" id="GO:0043565">
    <property type="term" value="F:sequence-specific DNA binding"/>
    <property type="evidence" value="ECO:0007669"/>
    <property type="project" value="UniProtKB-ARBA"/>
</dbReference>
<dbReference type="GO" id="GO:0010045">
    <property type="term" value="P:response to nickel cation"/>
    <property type="evidence" value="ECO:0007669"/>
    <property type="project" value="InterPro"/>
</dbReference>
<dbReference type="CDD" id="cd22231">
    <property type="entry name" value="RHH_NikR_HicB-like"/>
    <property type="match status" value="1"/>
</dbReference>
<dbReference type="FunFam" id="1.10.1220.10:FF:000001">
    <property type="entry name" value="Nickel-responsive regulator"/>
    <property type="match status" value="1"/>
</dbReference>
<dbReference type="FunFam" id="3.30.70.1150:FF:000002">
    <property type="entry name" value="Nickel-responsive regulator"/>
    <property type="match status" value="1"/>
</dbReference>
<dbReference type="Gene3D" id="3.30.70.1150">
    <property type="entry name" value="ACT-like. Chain A, domain 2"/>
    <property type="match status" value="1"/>
</dbReference>
<dbReference type="Gene3D" id="1.10.1220.10">
    <property type="entry name" value="Met repressor-like"/>
    <property type="match status" value="1"/>
</dbReference>
<dbReference type="HAMAP" id="MF_00476">
    <property type="entry name" value="NikR"/>
    <property type="match status" value="1"/>
</dbReference>
<dbReference type="InterPro" id="IPR027271">
    <property type="entry name" value="Acetolactate_synth/TF_NikR_C"/>
</dbReference>
<dbReference type="InterPro" id="IPR045865">
    <property type="entry name" value="ACT-like_dom_sf"/>
</dbReference>
<dbReference type="InterPro" id="IPR013321">
    <property type="entry name" value="Arc_rbn_hlx_hlx"/>
</dbReference>
<dbReference type="InterPro" id="IPR002145">
    <property type="entry name" value="CopG"/>
</dbReference>
<dbReference type="InterPro" id="IPR050192">
    <property type="entry name" value="CopG/NikR_regulator"/>
</dbReference>
<dbReference type="InterPro" id="IPR022988">
    <property type="entry name" value="Ni_resp_reg_NikR"/>
</dbReference>
<dbReference type="InterPro" id="IPR014160">
    <property type="entry name" value="Nickel_NikR_proteobac"/>
</dbReference>
<dbReference type="InterPro" id="IPR010985">
    <property type="entry name" value="Ribbon_hlx_hlx"/>
</dbReference>
<dbReference type="InterPro" id="IPR014864">
    <property type="entry name" value="TF_NikR_Ni-bd_C"/>
</dbReference>
<dbReference type="NCBIfam" id="TIGR02793">
    <property type="entry name" value="nikR"/>
    <property type="match status" value="1"/>
</dbReference>
<dbReference type="NCBIfam" id="NF002815">
    <property type="entry name" value="PRK02967.1"/>
    <property type="match status" value="1"/>
</dbReference>
<dbReference type="NCBIfam" id="NF003381">
    <property type="entry name" value="PRK04460.1"/>
    <property type="match status" value="1"/>
</dbReference>
<dbReference type="PANTHER" id="PTHR34719">
    <property type="entry name" value="NICKEL-RESPONSIVE REGULATOR"/>
    <property type="match status" value="1"/>
</dbReference>
<dbReference type="PANTHER" id="PTHR34719:SF2">
    <property type="entry name" value="NICKEL-RESPONSIVE REGULATOR"/>
    <property type="match status" value="1"/>
</dbReference>
<dbReference type="Pfam" id="PF08753">
    <property type="entry name" value="NikR_C"/>
    <property type="match status" value="1"/>
</dbReference>
<dbReference type="Pfam" id="PF01402">
    <property type="entry name" value="RHH_1"/>
    <property type="match status" value="1"/>
</dbReference>
<dbReference type="SUPFAM" id="SSF55021">
    <property type="entry name" value="ACT-like"/>
    <property type="match status" value="1"/>
</dbReference>
<dbReference type="SUPFAM" id="SSF47598">
    <property type="entry name" value="Ribbon-helix-helix"/>
    <property type="match status" value="1"/>
</dbReference>
<organism>
    <name type="scientific">Escherichia coli O6:K15:H31 (strain 536 / UPEC)</name>
    <dbReference type="NCBI Taxonomy" id="362663"/>
    <lineage>
        <taxon>Bacteria</taxon>
        <taxon>Pseudomonadati</taxon>
        <taxon>Pseudomonadota</taxon>
        <taxon>Gammaproteobacteria</taxon>
        <taxon>Enterobacterales</taxon>
        <taxon>Enterobacteriaceae</taxon>
        <taxon>Escherichia</taxon>
    </lineage>
</organism>
<sequence length="133" mass="15078">MQRVTITLDDDLLETLDSLSQRRGYNNRSEAIRDILRSALAQEATQQHGTQGFAVLSYVYEHEKRDLASRIVATQHHHHDLSVATLHVHINHDDCLEIAVLKGDMGDVQHFADDVIAQRGVRHGHLQCLPKED</sequence>
<feature type="chain" id="PRO_1000014064" description="Nickel-responsive regulator">
    <location>
        <begin position="1"/>
        <end position="133"/>
    </location>
</feature>
<feature type="binding site" evidence="1">
    <location>
        <position position="76"/>
    </location>
    <ligand>
        <name>Ni(2+)</name>
        <dbReference type="ChEBI" id="CHEBI:49786"/>
    </ligand>
</feature>
<feature type="binding site" evidence="1">
    <location>
        <position position="87"/>
    </location>
    <ligand>
        <name>Ni(2+)</name>
        <dbReference type="ChEBI" id="CHEBI:49786"/>
    </ligand>
</feature>
<feature type="binding site" evidence="1">
    <location>
        <position position="89"/>
    </location>
    <ligand>
        <name>Ni(2+)</name>
        <dbReference type="ChEBI" id="CHEBI:49786"/>
    </ligand>
</feature>
<feature type="binding site" evidence="1">
    <location>
        <position position="95"/>
    </location>
    <ligand>
        <name>Ni(2+)</name>
        <dbReference type="ChEBI" id="CHEBI:49786"/>
    </ligand>
</feature>
<gene>
    <name evidence="1" type="primary">nikR</name>
    <name type="ordered locus">ECP_3576</name>
</gene>
<keyword id="KW-0238">DNA-binding</keyword>
<keyword id="KW-0479">Metal-binding</keyword>
<keyword id="KW-0533">Nickel</keyword>
<keyword id="KW-0678">Repressor</keyword>
<keyword id="KW-0804">Transcription</keyword>
<keyword id="KW-0805">Transcription regulation</keyword>
<name>NIKR_ECOL5</name>
<reference key="1">
    <citation type="journal article" date="2006" name="Mol. Microbiol.">
        <title>Role of pathogenicity island-associated integrases in the genome plasticity of uropathogenic Escherichia coli strain 536.</title>
        <authorList>
            <person name="Hochhut B."/>
            <person name="Wilde C."/>
            <person name="Balling G."/>
            <person name="Middendorf B."/>
            <person name="Dobrindt U."/>
            <person name="Brzuszkiewicz E."/>
            <person name="Gottschalk G."/>
            <person name="Carniel E."/>
            <person name="Hacker J."/>
        </authorList>
    </citation>
    <scope>NUCLEOTIDE SEQUENCE [LARGE SCALE GENOMIC DNA]</scope>
    <source>
        <strain>536 / UPEC</strain>
    </source>
</reference>